<comment type="cofactor">
    <cofactor evidence="1">
        <name>Mg(2+)</name>
        <dbReference type="ChEBI" id="CHEBI:18420"/>
    </cofactor>
</comment>
<comment type="similarity">
    <text evidence="3">Belongs to the Nudix hydrolase family.</text>
</comment>
<organism>
    <name type="scientific">Streptomyces coelicolor (strain ATCC BAA-471 / A3(2) / M145)</name>
    <dbReference type="NCBI Taxonomy" id="100226"/>
    <lineage>
        <taxon>Bacteria</taxon>
        <taxon>Bacillati</taxon>
        <taxon>Actinomycetota</taxon>
        <taxon>Actinomycetes</taxon>
        <taxon>Kitasatosporales</taxon>
        <taxon>Streptomycetaceae</taxon>
        <taxon>Streptomyces</taxon>
        <taxon>Streptomyces albidoflavus group</taxon>
    </lineage>
</organism>
<evidence type="ECO:0000250" key="1"/>
<evidence type="ECO:0000255" key="2">
    <source>
        <dbReference type="PROSITE-ProRule" id="PRU00794"/>
    </source>
</evidence>
<evidence type="ECO:0000305" key="3"/>
<name>Y1686_STRCO</name>
<protein>
    <recommendedName>
        <fullName>Uncharacterized Nudix hydrolase SCO1686</fullName>
        <ecNumber>3.6.-.-</ecNumber>
    </recommendedName>
</protein>
<accession>Q9S266</accession>
<sequence>MDGLMSSADEILDIVDENDRVVGQARRGDAYARGLRHRCVFVWARDPEGRVFVHRRTATKLVFPAPYDMFVGGVVGAGESYDDAALREAEEELGASGLPRPEFLFKFLYDDGAGRTWWSAVYEVRVAGAVSPQVEEVAWHGFLPEAELEGRLGEWEFVPDGLSAYARLRAWRGASGPGSVG</sequence>
<dbReference type="EC" id="3.6.-.-"/>
<dbReference type="EMBL" id="AL939109">
    <property type="protein sequence ID" value="CAB46784.1"/>
    <property type="molecule type" value="Genomic_DNA"/>
</dbReference>
<dbReference type="PIR" id="T36787">
    <property type="entry name" value="T36787"/>
</dbReference>
<dbReference type="RefSeq" id="NP_625960.1">
    <property type="nucleotide sequence ID" value="NC_003888.3"/>
</dbReference>
<dbReference type="SMR" id="Q9S266"/>
<dbReference type="STRING" id="100226.gene:17759280"/>
<dbReference type="PaxDb" id="100226-SCO1686"/>
<dbReference type="KEGG" id="sco:SCO1686"/>
<dbReference type="PATRIC" id="fig|100226.15.peg.1703"/>
<dbReference type="eggNOG" id="COG1443">
    <property type="taxonomic scope" value="Bacteria"/>
</dbReference>
<dbReference type="HOGENOM" id="CLU_060552_3_1_11"/>
<dbReference type="InParanoid" id="Q9S266"/>
<dbReference type="OrthoDB" id="67499at2"/>
<dbReference type="PhylomeDB" id="Q9S266"/>
<dbReference type="Proteomes" id="UP000001973">
    <property type="component" value="Chromosome"/>
</dbReference>
<dbReference type="GO" id="GO:0016817">
    <property type="term" value="F:hydrolase activity, acting on acid anhydrides"/>
    <property type="evidence" value="ECO:0007669"/>
    <property type="project" value="InterPro"/>
</dbReference>
<dbReference type="GO" id="GO:0046872">
    <property type="term" value="F:metal ion binding"/>
    <property type="evidence" value="ECO:0007669"/>
    <property type="project" value="UniProtKB-KW"/>
</dbReference>
<dbReference type="CDD" id="cd04697">
    <property type="entry name" value="NUDIX_Hydrolase"/>
    <property type="match status" value="1"/>
</dbReference>
<dbReference type="Gene3D" id="3.90.79.10">
    <property type="entry name" value="Nucleoside Triphosphate Pyrophosphohydrolase"/>
    <property type="match status" value="1"/>
</dbReference>
<dbReference type="InterPro" id="IPR015797">
    <property type="entry name" value="NUDIX_hydrolase-like_dom_sf"/>
</dbReference>
<dbReference type="InterPro" id="IPR020084">
    <property type="entry name" value="NUDIX_hydrolase_CS"/>
</dbReference>
<dbReference type="InterPro" id="IPR000086">
    <property type="entry name" value="NUDIX_hydrolase_dom"/>
</dbReference>
<dbReference type="InterPro" id="IPR024195">
    <property type="entry name" value="NUDIX_hydrolase_YfcD_pred"/>
</dbReference>
<dbReference type="PANTHER" id="PTHR10885">
    <property type="entry name" value="ISOPENTENYL-DIPHOSPHATE DELTA-ISOMERASE"/>
    <property type="match status" value="1"/>
</dbReference>
<dbReference type="PANTHER" id="PTHR10885:SF0">
    <property type="entry name" value="ISOPENTENYL-DIPHOSPHATE DELTA-ISOMERASE"/>
    <property type="match status" value="1"/>
</dbReference>
<dbReference type="Pfam" id="PF00293">
    <property type="entry name" value="NUDIX"/>
    <property type="match status" value="1"/>
</dbReference>
<dbReference type="PIRSF" id="PIRSF017340">
    <property type="entry name" value="Nudix_hydro"/>
    <property type="match status" value="1"/>
</dbReference>
<dbReference type="SUPFAM" id="SSF55811">
    <property type="entry name" value="Nudix"/>
    <property type="match status" value="1"/>
</dbReference>
<dbReference type="PROSITE" id="PS51462">
    <property type="entry name" value="NUDIX"/>
    <property type="match status" value="1"/>
</dbReference>
<dbReference type="PROSITE" id="PS00893">
    <property type="entry name" value="NUDIX_BOX"/>
    <property type="match status" value="1"/>
</dbReference>
<keyword id="KW-0378">Hydrolase</keyword>
<keyword id="KW-0460">Magnesium</keyword>
<keyword id="KW-0479">Metal-binding</keyword>
<keyword id="KW-1185">Reference proteome</keyword>
<feature type="chain" id="PRO_0000057087" description="Uncharacterized Nudix hydrolase SCO1686">
    <location>
        <begin position="1"/>
        <end position="181"/>
    </location>
</feature>
<feature type="domain" description="Nudix hydrolase" evidence="2">
    <location>
        <begin position="35"/>
        <end position="175"/>
    </location>
</feature>
<feature type="short sequence motif" description="Nudix box">
    <location>
        <begin position="72"/>
        <end position="94"/>
    </location>
</feature>
<feature type="binding site" evidence="1">
    <location>
        <position position="88"/>
    </location>
    <ligand>
        <name>Mg(2+)</name>
        <dbReference type="ChEBI" id="CHEBI:18420"/>
    </ligand>
</feature>
<feature type="binding site" evidence="1">
    <location>
        <position position="92"/>
    </location>
    <ligand>
        <name>Mg(2+)</name>
        <dbReference type="ChEBI" id="CHEBI:18420"/>
    </ligand>
</feature>
<reference key="1">
    <citation type="journal article" date="2002" name="Nature">
        <title>Complete genome sequence of the model actinomycete Streptomyces coelicolor A3(2).</title>
        <authorList>
            <person name="Bentley S.D."/>
            <person name="Chater K.F."/>
            <person name="Cerdeno-Tarraga A.-M."/>
            <person name="Challis G.L."/>
            <person name="Thomson N.R."/>
            <person name="James K.D."/>
            <person name="Harris D.E."/>
            <person name="Quail M.A."/>
            <person name="Kieser H."/>
            <person name="Harper D."/>
            <person name="Bateman A."/>
            <person name="Brown S."/>
            <person name="Chandra G."/>
            <person name="Chen C.W."/>
            <person name="Collins M."/>
            <person name="Cronin A."/>
            <person name="Fraser A."/>
            <person name="Goble A."/>
            <person name="Hidalgo J."/>
            <person name="Hornsby T."/>
            <person name="Howarth S."/>
            <person name="Huang C.-H."/>
            <person name="Kieser T."/>
            <person name="Larke L."/>
            <person name="Murphy L.D."/>
            <person name="Oliver K."/>
            <person name="O'Neil S."/>
            <person name="Rabbinowitsch E."/>
            <person name="Rajandream M.A."/>
            <person name="Rutherford K.M."/>
            <person name="Rutter S."/>
            <person name="Seeger K."/>
            <person name="Saunders D."/>
            <person name="Sharp S."/>
            <person name="Squares R."/>
            <person name="Squares S."/>
            <person name="Taylor K."/>
            <person name="Warren T."/>
            <person name="Wietzorrek A."/>
            <person name="Woodward J.R."/>
            <person name="Barrell B.G."/>
            <person name="Parkhill J."/>
            <person name="Hopwood D.A."/>
        </authorList>
    </citation>
    <scope>NUCLEOTIDE SEQUENCE [LARGE SCALE GENOMIC DNA]</scope>
    <source>
        <strain>ATCC BAA-471 / A3(2) / M145</strain>
    </source>
</reference>
<proteinExistence type="inferred from homology"/>
<gene>
    <name type="ordered locus">SCO1686</name>
    <name type="ORF">SCI30A.07</name>
</gene>